<accession>A5IBF0</accession>
<reference key="1">
    <citation type="submission" date="2006-11" db="EMBL/GenBank/DDBJ databases">
        <title>Identification and characterization of a new conjugation/ type IVA secretion system (trb/tra) of L. pneumophila Corby localized on a mobile genomic island.</title>
        <authorList>
            <person name="Gloeckner G."/>
            <person name="Albert-Weissenberger C."/>
            <person name="Weinmann E."/>
            <person name="Jacobi S."/>
            <person name="Schunder E."/>
            <person name="Steinert M."/>
            <person name="Buchrieser C."/>
            <person name="Hacker J."/>
            <person name="Heuner K."/>
        </authorList>
    </citation>
    <scope>NUCLEOTIDE SEQUENCE [LARGE SCALE GENOMIC DNA]</scope>
    <source>
        <strain>Corby</strain>
    </source>
</reference>
<evidence type="ECO:0000255" key="1">
    <source>
        <dbReference type="HAMAP-Rule" id="MF_01576"/>
    </source>
</evidence>
<proteinExistence type="inferred from homology"/>
<sequence>MPASLIDGREISALRRTELKQRVQYHVEQGQRAPGLAVVLIGNDPASVIYVSNKRKACEEVGITSHSYDLPAETTQEKLIELINELNQSDKIDGILIQLPLPKHINERTIIEHIKPEKDVDGFHPYNLGRLAQRNPFLRPCTPLGIMNLLHHYELNVKRKHAVVIGASNIVGRPMSLELLLAGATVTICHKFTQQLQKFVEIADFLIVATGKMDVIATDWLREHQVVIDVGMHRLPDGSIRGDIDFKKAVEKVAWITPVPGGVGPMTIVTLLENTMMSAARLRE</sequence>
<organism>
    <name type="scientific">Legionella pneumophila (strain Corby)</name>
    <dbReference type="NCBI Taxonomy" id="400673"/>
    <lineage>
        <taxon>Bacteria</taxon>
        <taxon>Pseudomonadati</taxon>
        <taxon>Pseudomonadota</taxon>
        <taxon>Gammaproteobacteria</taxon>
        <taxon>Legionellales</taxon>
        <taxon>Legionellaceae</taxon>
        <taxon>Legionella</taxon>
    </lineage>
</organism>
<dbReference type="EC" id="1.5.1.5" evidence="1"/>
<dbReference type="EC" id="3.5.4.9" evidence="1"/>
<dbReference type="EMBL" id="CP000675">
    <property type="protein sequence ID" value="ABQ54700.1"/>
    <property type="molecule type" value="Genomic_DNA"/>
</dbReference>
<dbReference type="RefSeq" id="WP_011215342.1">
    <property type="nucleotide sequence ID" value="NZ_JAPMSS010000002.1"/>
</dbReference>
<dbReference type="SMR" id="A5IBF0"/>
<dbReference type="KEGG" id="lpc:LPC_0722"/>
<dbReference type="HOGENOM" id="CLU_034045_2_1_6"/>
<dbReference type="UniPathway" id="UPA00193"/>
<dbReference type="GO" id="GO:0005829">
    <property type="term" value="C:cytosol"/>
    <property type="evidence" value="ECO:0007669"/>
    <property type="project" value="TreeGrafter"/>
</dbReference>
<dbReference type="GO" id="GO:0004477">
    <property type="term" value="F:methenyltetrahydrofolate cyclohydrolase activity"/>
    <property type="evidence" value="ECO:0007669"/>
    <property type="project" value="UniProtKB-UniRule"/>
</dbReference>
<dbReference type="GO" id="GO:0004488">
    <property type="term" value="F:methylenetetrahydrofolate dehydrogenase (NADP+) activity"/>
    <property type="evidence" value="ECO:0007669"/>
    <property type="project" value="UniProtKB-UniRule"/>
</dbReference>
<dbReference type="GO" id="GO:0000105">
    <property type="term" value="P:L-histidine biosynthetic process"/>
    <property type="evidence" value="ECO:0007669"/>
    <property type="project" value="UniProtKB-KW"/>
</dbReference>
<dbReference type="GO" id="GO:0009086">
    <property type="term" value="P:methionine biosynthetic process"/>
    <property type="evidence" value="ECO:0007669"/>
    <property type="project" value="UniProtKB-KW"/>
</dbReference>
<dbReference type="GO" id="GO:0006164">
    <property type="term" value="P:purine nucleotide biosynthetic process"/>
    <property type="evidence" value="ECO:0007669"/>
    <property type="project" value="UniProtKB-KW"/>
</dbReference>
<dbReference type="GO" id="GO:0035999">
    <property type="term" value="P:tetrahydrofolate interconversion"/>
    <property type="evidence" value="ECO:0007669"/>
    <property type="project" value="UniProtKB-UniRule"/>
</dbReference>
<dbReference type="CDD" id="cd01080">
    <property type="entry name" value="NAD_bind_m-THF_DH_Cyclohyd"/>
    <property type="match status" value="1"/>
</dbReference>
<dbReference type="FunFam" id="3.40.50.10860:FF:000001">
    <property type="entry name" value="Bifunctional protein FolD"/>
    <property type="match status" value="1"/>
</dbReference>
<dbReference type="FunFam" id="3.40.50.720:FF:000006">
    <property type="entry name" value="Bifunctional protein FolD"/>
    <property type="match status" value="1"/>
</dbReference>
<dbReference type="Gene3D" id="3.40.50.10860">
    <property type="entry name" value="Leucine Dehydrogenase, chain A, domain 1"/>
    <property type="match status" value="1"/>
</dbReference>
<dbReference type="Gene3D" id="3.40.50.720">
    <property type="entry name" value="NAD(P)-binding Rossmann-like Domain"/>
    <property type="match status" value="1"/>
</dbReference>
<dbReference type="HAMAP" id="MF_01576">
    <property type="entry name" value="THF_DHG_CYH"/>
    <property type="match status" value="1"/>
</dbReference>
<dbReference type="InterPro" id="IPR046346">
    <property type="entry name" value="Aminoacid_DH-like_N_sf"/>
</dbReference>
<dbReference type="InterPro" id="IPR036291">
    <property type="entry name" value="NAD(P)-bd_dom_sf"/>
</dbReference>
<dbReference type="InterPro" id="IPR000672">
    <property type="entry name" value="THF_DH/CycHdrlase"/>
</dbReference>
<dbReference type="InterPro" id="IPR020630">
    <property type="entry name" value="THF_DH/CycHdrlase_cat_dom"/>
</dbReference>
<dbReference type="InterPro" id="IPR020867">
    <property type="entry name" value="THF_DH/CycHdrlase_CS"/>
</dbReference>
<dbReference type="InterPro" id="IPR020631">
    <property type="entry name" value="THF_DH/CycHdrlase_NAD-bd_dom"/>
</dbReference>
<dbReference type="NCBIfam" id="NF008058">
    <property type="entry name" value="PRK10792.1"/>
    <property type="match status" value="1"/>
</dbReference>
<dbReference type="NCBIfam" id="NF010783">
    <property type="entry name" value="PRK14186.1"/>
    <property type="match status" value="1"/>
</dbReference>
<dbReference type="PANTHER" id="PTHR48099:SF5">
    <property type="entry name" value="C-1-TETRAHYDROFOLATE SYNTHASE, CYTOPLASMIC"/>
    <property type="match status" value="1"/>
</dbReference>
<dbReference type="PANTHER" id="PTHR48099">
    <property type="entry name" value="C-1-TETRAHYDROFOLATE SYNTHASE, CYTOPLASMIC-RELATED"/>
    <property type="match status" value="1"/>
</dbReference>
<dbReference type="Pfam" id="PF00763">
    <property type="entry name" value="THF_DHG_CYH"/>
    <property type="match status" value="1"/>
</dbReference>
<dbReference type="Pfam" id="PF02882">
    <property type="entry name" value="THF_DHG_CYH_C"/>
    <property type="match status" value="1"/>
</dbReference>
<dbReference type="PRINTS" id="PR00085">
    <property type="entry name" value="THFDHDRGNASE"/>
</dbReference>
<dbReference type="SUPFAM" id="SSF53223">
    <property type="entry name" value="Aminoacid dehydrogenase-like, N-terminal domain"/>
    <property type="match status" value="1"/>
</dbReference>
<dbReference type="SUPFAM" id="SSF51735">
    <property type="entry name" value="NAD(P)-binding Rossmann-fold domains"/>
    <property type="match status" value="1"/>
</dbReference>
<dbReference type="PROSITE" id="PS00766">
    <property type="entry name" value="THF_DHG_CYH_1"/>
    <property type="match status" value="1"/>
</dbReference>
<dbReference type="PROSITE" id="PS00767">
    <property type="entry name" value="THF_DHG_CYH_2"/>
    <property type="match status" value="1"/>
</dbReference>
<name>FOLD_LEGPC</name>
<comment type="function">
    <text evidence="1">Catalyzes the oxidation of 5,10-methylenetetrahydrofolate to 5,10-methenyltetrahydrofolate and then the hydrolysis of 5,10-methenyltetrahydrofolate to 10-formyltetrahydrofolate.</text>
</comment>
<comment type="catalytic activity">
    <reaction evidence="1">
        <text>(6R)-5,10-methylene-5,6,7,8-tetrahydrofolate + NADP(+) = (6R)-5,10-methenyltetrahydrofolate + NADPH</text>
        <dbReference type="Rhea" id="RHEA:22812"/>
        <dbReference type="ChEBI" id="CHEBI:15636"/>
        <dbReference type="ChEBI" id="CHEBI:57455"/>
        <dbReference type="ChEBI" id="CHEBI:57783"/>
        <dbReference type="ChEBI" id="CHEBI:58349"/>
        <dbReference type="EC" id="1.5.1.5"/>
    </reaction>
</comment>
<comment type="catalytic activity">
    <reaction evidence="1">
        <text>(6R)-5,10-methenyltetrahydrofolate + H2O = (6R)-10-formyltetrahydrofolate + H(+)</text>
        <dbReference type="Rhea" id="RHEA:23700"/>
        <dbReference type="ChEBI" id="CHEBI:15377"/>
        <dbReference type="ChEBI" id="CHEBI:15378"/>
        <dbReference type="ChEBI" id="CHEBI:57455"/>
        <dbReference type="ChEBI" id="CHEBI:195366"/>
        <dbReference type="EC" id="3.5.4.9"/>
    </reaction>
</comment>
<comment type="pathway">
    <text evidence="1">One-carbon metabolism; tetrahydrofolate interconversion.</text>
</comment>
<comment type="subunit">
    <text evidence="1">Homodimer.</text>
</comment>
<comment type="similarity">
    <text evidence="1">Belongs to the tetrahydrofolate dehydrogenase/cyclohydrolase family.</text>
</comment>
<gene>
    <name evidence="1" type="primary">folD</name>
    <name type="ordered locus">LPC_0722</name>
</gene>
<feature type="chain" id="PRO_0000305834" description="Bifunctional protein FolD">
    <location>
        <begin position="1"/>
        <end position="284"/>
    </location>
</feature>
<feature type="binding site" evidence="1">
    <location>
        <begin position="166"/>
        <end position="168"/>
    </location>
    <ligand>
        <name>NADP(+)</name>
        <dbReference type="ChEBI" id="CHEBI:58349"/>
    </ligand>
</feature>
<protein>
    <recommendedName>
        <fullName evidence="1">Bifunctional protein FolD</fullName>
    </recommendedName>
    <domain>
        <recommendedName>
            <fullName evidence="1">Methylenetetrahydrofolate dehydrogenase</fullName>
            <ecNumber evidence="1">1.5.1.5</ecNumber>
        </recommendedName>
    </domain>
    <domain>
        <recommendedName>
            <fullName evidence="1">Methenyltetrahydrofolate cyclohydrolase</fullName>
            <ecNumber evidence="1">3.5.4.9</ecNumber>
        </recommendedName>
    </domain>
</protein>
<keyword id="KW-0028">Amino-acid biosynthesis</keyword>
<keyword id="KW-0368">Histidine biosynthesis</keyword>
<keyword id="KW-0378">Hydrolase</keyword>
<keyword id="KW-0486">Methionine biosynthesis</keyword>
<keyword id="KW-0511">Multifunctional enzyme</keyword>
<keyword id="KW-0521">NADP</keyword>
<keyword id="KW-0554">One-carbon metabolism</keyword>
<keyword id="KW-0560">Oxidoreductase</keyword>
<keyword id="KW-0658">Purine biosynthesis</keyword>